<feature type="chain" id="PRO_0000115562" description="Small ribosomal subunit protein uS15">
    <location>
        <begin position="1"/>
        <end position="95"/>
    </location>
</feature>
<protein>
    <recommendedName>
        <fullName evidence="1">Small ribosomal subunit protein uS15</fullName>
    </recommendedName>
    <alternativeName>
        <fullName evidence="2">30S ribosomal protein S15</fullName>
    </alternativeName>
</protein>
<reference key="1">
    <citation type="journal article" date="2001" name="Proc. Natl. Acad. Sci. U.S.A.">
        <title>Genome sequence of an industrial microorganism Streptomyces avermitilis: deducing the ability of producing secondary metabolites.</title>
        <authorList>
            <person name="Omura S."/>
            <person name="Ikeda H."/>
            <person name="Ishikawa J."/>
            <person name="Hanamoto A."/>
            <person name="Takahashi C."/>
            <person name="Shinose M."/>
            <person name="Takahashi Y."/>
            <person name="Horikawa H."/>
            <person name="Nakazawa H."/>
            <person name="Osonoe T."/>
            <person name="Kikuchi H."/>
            <person name="Shiba T."/>
            <person name="Sakaki Y."/>
            <person name="Hattori M."/>
        </authorList>
    </citation>
    <scope>NUCLEOTIDE SEQUENCE [LARGE SCALE GENOMIC DNA]</scope>
    <source>
        <strain>ATCC 31267 / DSM 46492 / JCM 5070 / NBRC 14893 / NCIMB 12804 / NRRL 8165 / MA-4680</strain>
    </source>
</reference>
<reference key="2">
    <citation type="journal article" date="2003" name="Nat. Biotechnol.">
        <title>Complete genome sequence and comparative analysis of the industrial microorganism Streptomyces avermitilis.</title>
        <authorList>
            <person name="Ikeda H."/>
            <person name="Ishikawa J."/>
            <person name="Hanamoto A."/>
            <person name="Shinose M."/>
            <person name="Kikuchi H."/>
            <person name="Shiba T."/>
            <person name="Sakaki Y."/>
            <person name="Hattori M."/>
            <person name="Omura S."/>
        </authorList>
    </citation>
    <scope>NUCLEOTIDE SEQUENCE [LARGE SCALE GENOMIC DNA]</scope>
    <source>
        <strain>ATCC 31267 / DSM 46492 / JCM 5070 / NBRC 14893 / NCIMB 12804 / NRRL 8165 / MA-4680</strain>
    </source>
</reference>
<proteinExistence type="inferred from homology"/>
<keyword id="KW-1185">Reference proteome</keyword>
<keyword id="KW-0687">Ribonucleoprotein</keyword>
<keyword id="KW-0689">Ribosomal protein</keyword>
<keyword id="KW-0694">RNA-binding</keyword>
<keyword id="KW-0699">rRNA-binding</keyword>
<accession>Q82K79</accession>
<sequence length="95" mass="10769">MSLDAATKKQIITEFGTKEGDTGSPEVQVAMLSRRISDLTEHLKTHKHDHHSRRGLLILVGQRRRLLQYLAKKDIQRFRALVDRLGIRRGAAGAK</sequence>
<dbReference type="EMBL" id="BA000030">
    <property type="protein sequence ID" value="BAC70235.1"/>
    <property type="molecule type" value="Genomic_DNA"/>
</dbReference>
<dbReference type="RefSeq" id="WP_005479656.1">
    <property type="nucleotide sequence ID" value="NZ_JZJK01000064.1"/>
</dbReference>
<dbReference type="SMR" id="Q82K79"/>
<dbReference type="GeneID" id="96265916"/>
<dbReference type="KEGG" id="sma:SAVERM_2524"/>
<dbReference type="eggNOG" id="COG0184">
    <property type="taxonomic scope" value="Bacteria"/>
</dbReference>
<dbReference type="HOGENOM" id="CLU_148518_0_0_11"/>
<dbReference type="OrthoDB" id="9799262at2"/>
<dbReference type="Proteomes" id="UP000000428">
    <property type="component" value="Chromosome"/>
</dbReference>
<dbReference type="GO" id="GO:0022627">
    <property type="term" value="C:cytosolic small ribosomal subunit"/>
    <property type="evidence" value="ECO:0007669"/>
    <property type="project" value="TreeGrafter"/>
</dbReference>
<dbReference type="GO" id="GO:0019843">
    <property type="term" value="F:rRNA binding"/>
    <property type="evidence" value="ECO:0007669"/>
    <property type="project" value="UniProtKB-UniRule"/>
</dbReference>
<dbReference type="GO" id="GO:0003735">
    <property type="term" value="F:structural constituent of ribosome"/>
    <property type="evidence" value="ECO:0007669"/>
    <property type="project" value="InterPro"/>
</dbReference>
<dbReference type="GO" id="GO:0006412">
    <property type="term" value="P:translation"/>
    <property type="evidence" value="ECO:0007669"/>
    <property type="project" value="UniProtKB-UniRule"/>
</dbReference>
<dbReference type="CDD" id="cd00353">
    <property type="entry name" value="Ribosomal_S15p_S13e"/>
    <property type="match status" value="1"/>
</dbReference>
<dbReference type="FunFam" id="1.10.287.10:FF:000002">
    <property type="entry name" value="30S ribosomal protein S15"/>
    <property type="match status" value="1"/>
</dbReference>
<dbReference type="Gene3D" id="6.10.250.3130">
    <property type="match status" value="1"/>
</dbReference>
<dbReference type="Gene3D" id="1.10.287.10">
    <property type="entry name" value="S15/NS1, RNA-binding"/>
    <property type="match status" value="1"/>
</dbReference>
<dbReference type="HAMAP" id="MF_01343_B">
    <property type="entry name" value="Ribosomal_uS15_B"/>
    <property type="match status" value="1"/>
</dbReference>
<dbReference type="InterPro" id="IPR000589">
    <property type="entry name" value="Ribosomal_uS15"/>
</dbReference>
<dbReference type="InterPro" id="IPR005290">
    <property type="entry name" value="Ribosomal_uS15_bac-type"/>
</dbReference>
<dbReference type="InterPro" id="IPR009068">
    <property type="entry name" value="uS15_NS1_RNA-bd_sf"/>
</dbReference>
<dbReference type="NCBIfam" id="TIGR00952">
    <property type="entry name" value="S15_bact"/>
    <property type="match status" value="1"/>
</dbReference>
<dbReference type="PANTHER" id="PTHR23321">
    <property type="entry name" value="RIBOSOMAL PROTEIN S15, BACTERIAL AND ORGANELLAR"/>
    <property type="match status" value="1"/>
</dbReference>
<dbReference type="PANTHER" id="PTHR23321:SF26">
    <property type="entry name" value="SMALL RIBOSOMAL SUBUNIT PROTEIN US15M"/>
    <property type="match status" value="1"/>
</dbReference>
<dbReference type="Pfam" id="PF00312">
    <property type="entry name" value="Ribosomal_S15"/>
    <property type="match status" value="1"/>
</dbReference>
<dbReference type="SMART" id="SM01387">
    <property type="entry name" value="Ribosomal_S15"/>
    <property type="match status" value="1"/>
</dbReference>
<dbReference type="SUPFAM" id="SSF47060">
    <property type="entry name" value="S15/NS1 RNA-binding domain"/>
    <property type="match status" value="1"/>
</dbReference>
<dbReference type="PROSITE" id="PS00362">
    <property type="entry name" value="RIBOSOMAL_S15"/>
    <property type="match status" value="1"/>
</dbReference>
<evidence type="ECO:0000255" key="1">
    <source>
        <dbReference type="HAMAP-Rule" id="MF_01343"/>
    </source>
</evidence>
<evidence type="ECO:0000305" key="2"/>
<organism>
    <name type="scientific">Streptomyces avermitilis (strain ATCC 31267 / DSM 46492 / JCM 5070 / NBRC 14893 / NCIMB 12804 / NRRL 8165 / MA-4680)</name>
    <dbReference type="NCBI Taxonomy" id="227882"/>
    <lineage>
        <taxon>Bacteria</taxon>
        <taxon>Bacillati</taxon>
        <taxon>Actinomycetota</taxon>
        <taxon>Actinomycetes</taxon>
        <taxon>Kitasatosporales</taxon>
        <taxon>Streptomycetaceae</taxon>
        <taxon>Streptomyces</taxon>
    </lineage>
</organism>
<name>RS15_STRAW</name>
<gene>
    <name evidence="1" type="primary">rpsO</name>
    <name type="ordered locus">SAV_2524</name>
</gene>
<comment type="function">
    <text evidence="1">One of the primary rRNA binding proteins, it binds directly to 16S rRNA where it helps nucleate assembly of the platform of the 30S subunit by binding and bridging several RNA helices of the 16S rRNA.</text>
</comment>
<comment type="function">
    <text evidence="1">Forms an intersubunit bridge (bridge B4) with the 23S rRNA of the 50S subunit in the ribosome.</text>
</comment>
<comment type="subunit">
    <text evidence="1">Part of the 30S ribosomal subunit. Forms a bridge to the 50S subunit in the 70S ribosome, contacting the 23S rRNA.</text>
</comment>
<comment type="similarity">
    <text evidence="1">Belongs to the universal ribosomal protein uS15 family.</text>
</comment>